<evidence type="ECO:0000250" key="1"/>
<evidence type="ECO:0000255" key="2">
    <source>
        <dbReference type="HAMAP-Rule" id="MF_01382"/>
    </source>
</evidence>
<evidence type="ECO:0000305" key="3"/>
<organism>
    <name type="scientific">Buchnera aphidicola subsp. Cinara cedri (strain Cc)</name>
    <dbReference type="NCBI Taxonomy" id="372461"/>
    <lineage>
        <taxon>Bacteria</taxon>
        <taxon>Pseudomonadati</taxon>
        <taxon>Pseudomonadota</taxon>
        <taxon>Gammaproteobacteria</taxon>
        <taxon>Enterobacterales</taxon>
        <taxon>Erwiniaceae</taxon>
        <taxon>Buchnera</taxon>
    </lineage>
</organism>
<feature type="chain" id="PRO_0000320747" description="Protein translocase subunit SecA">
    <location>
        <begin position="1"/>
        <end position="864"/>
    </location>
</feature>
<feature type="binding site" evidence="2">
    <location>
        <position position="87"/>
    </location>
    <ligand>
        <name>ATP</name>
        <dbReference type="ChEBI" id="CHEBI:30616"/>
    </ligand>
</feature>
<feature type="binding site" evidence="2">
    <location>
        <begin position="105"/>
        <end position="109"/>
    </location>
    <ligand>
        <name>ATP</name>
        <dbReference type="ChEBI" id="CHEBI:30616"/>
    </ligand>
</feature>
<feature type="binding site" evidence="2">
    <location>
        <position position="512"/>
    </location>
    <ligand>
        <name>ATP</name>
        <dbReference type="ChEBI" id="CHEBI:30616"/>
    </ligand>
</feature>
<dbReference type="EC" id="7.4.2.8" evidence="2"/>
<dbReference type="EMBL" id="CP000263">
    <property type="protein sequence ID" value="ABJ90606.1"/>
    <property type="molecule type" value="Genomic_DNA"/>
</dbReference>
<dbReference type="RefSeq" id="WP_011672525.1">
    <property type="nucleotide sequence ID" value="NC_008513.1"/>
</dbReference>
<dbReference type="SMR" id="Q057U3"/>
<dbReference type="STRING" id="372461.BCc_130"/>
<dbReference type="KEGG" id="bcc:BCc_130"/>
<dbReference type="eggNOG" id="COG0653">
    <property type="taxonomic scope" value="Bacteria"/>
</dbReference>
<dbReference type="HOGENOM" id="CLU_005314_3_0_6"/>
<dbReference type="OrthoDB" id="9805579at2"/>
<dbReference type="Proteomes" id="UP000000669">
    <property type="component" value="Chromosome"/>
</dbReference>
<dbReference type="GO" id="GO:0031522">
    <property type="term" value="C:cell envelope Sec protein transport complex"/>
    <property type="evidence" value="ECO:0007669"/>
    <property type="project" value="TreeGrafter"/>
</dbReference>
<dbReference type="GO" id="GO:0005829">
    <property type="term" value="C:cytosol"/>
    <property type="evidence" value="ECO:0007669"/>
    <property type="project" value="TreeGrafter"/>
</dbReference>
<dbReference type="GO" id="GO:0005886">
    <property type="term" value="C:plasma membrane"/>
    <property type="evidence" value="ECO:0007669"/>
    <property type="project" value="UniProtKB-SubCell"/>
</dbReference>
<dbReference type="GO" id="GO:0005524">
    <property type="term" value="F:ATP binding"/>
    <property type="evidence" value="ECO:0007669"/>
    <property type="project" value="UniProtKB-UniRule"/>
</dbReference>
<dbReference type="GO" id="GO:0008564">
    <property type="term" value="F:protein-exporting ATPase activity"/>
    <property type="evidence" value="ECO:0007669"/>
    <property type="project" value="UniProtKB-EC"/>
</dbReference>
<dbReference type="GO" id="GO:0065002">
    <property type="term" value="P:intracellular protein transmembrane transport"/>
    <property type="evidence" value="ECO:0007669"/>
    <property type="project" value="UniProtKB-UniRule"/>
</dbReference>
<dbReference type="GO" id="GO:0017038">
    <property type="term" value="P:protein import"/>
    <property type="evidence" value="ECO:0007669"/>
    <property type="project" value="InterPro"/>
</dbReference>
<dbReference type="GO" id="GO:0006605">
    <property type="term" value="P:protein targeting"/>
    <property type="evidence" value="ECO:0007669"/>
    <property type="project" value="UniProtKB-UniRule"/>
</dbReference>
<dbReference type="GO" id="GO:0043952">
    <property type="term" value="P:protein transport by the Sec complex"/>
    <property type="evidence" value="ECO:0007669"/>
    <property type="project" value="TreeGrafter"/>
</dbReference>
<dbReference type="CDD" id="cd17928">
    <property type="entry name" value="DEXDc_SecA"/>
    <property type="match status" value="1"/>
</dbReference>
<dbReference type="CDD" id="cd18803">
    <property type="entry name" value="SF2_C_secA"/>
    <property type="match status" value="1"/>
</dbReference>
<dbReference type="FunFam" id="3.40.50.300:FF:000113">
    <property type="entry name" value="Preprotein translocase subunit SecA"/>
    <property type="match status" value="1"/>
</dbReference>
<dbReference type="FunFam" id="3.90.1440.10:FF:000001">
    <property type="entry name" value="Preprotein translocase subunit SecA"/>
    <property type="match status" value="1"/>
</dbReference>
<dbReference type="Gene3D" id="1.10.3060.10">
    <property type="entry name" value="Helical scaffold and wing domains of SecA"/>
    <property type="match status" value="1"/>
</dbReference>
<dbReference type="Gene3D" id="3.40.50.300">
    <property type="entry name" value="P-loop containing nucleotide triphosphate hydrolases"/>
    <property type="match status" value="2"/>
</dbReference>
<dbReference type="Gene3D" id="3.90.1440.10">
    <property type="entry name" value="SecA, preprotein cross-linking domain"/>
    <property type="match status" value="1"/>
</dbReference>
<dbReference type="HAMAP" id="MF_01382">
    <property type="entry name" value="SecA"/>
    <property type="match status" value="1"/>
</dbReference>
<dbReference type="InterPro" id="IPR014001">
    <property type="entry name" value="Helicase_ATP-bd"/>
</dbReference>
<dbReference type="InterPro" id="IPR027417">
    <property type="entry name" value="P-loop_NTPase"/>
</dbReference>
<dbReference type="InterPro" id="IPR000185">
    <property type="entry name" value="SecA"/>
</dbReference>
<dbReference type="InterPro" id="IPR020937">
    <property type="entry name" value="SecA_CS"/>
</dbReference>
<dbReference type="InterPro" id="IPR011115">
    <property type="entry name" value="SecA_DEAD"/>
</dbReference>
<dbReference type="InterPro" id="IPR014018">
    <property type="entry name" value="SecA_motor_DEAD"/>
</dbReference>
<dbReference type="InterPro" id="IPR011130">
    <property type="entry name" value="SecA_preprotein_X-link_dom"/>
</dbReference>
<dbReference type="InterPro" id="IPR044722">
    <property type="entry name" value="SecA_SF2_C"/>
</dbReference>
<dbReference type="InterPro" id="IPR011116">
    <property type="entry name" value="SecA_Wing/Scaffold"/>
</dbReference>
<dbReference type="InterPro" id="IPR036266">
    <property type="entry name" value="SecA_Wing/Scaffold_sf"/>
</dbReference>
<dbReference type="InterPro" id="IPR036670">
    <property type="entry name" value="SecA_X-link_sf"/>
</dbReference>
<dbReference type="NCBIfam" id="NF009538">
    <property type="entry name" value="PRK12904.1"/>
    <property type="match status" value="1"/>
</dbReference>
<dbReference type="NCBIfam" id="TIGR00963">
    <property type="entry name" value="secA"/>
    <property type="match status" value="1"/>
</dbReference>
<dbReference type="PANTHER" id="PTHR30612:SF0">
    <property type="entry name" value="CHLOROPLAST PROTEIN-TRANSPORTING ATPASE"/>
    <property type="match status" value="1"/>
</dbReference>
<dbReference type="PANTHER" id="PTHR30612">
    <property type="entry name" value="SECA INNER MEMBRANE COMPONENT OF SEC PROTEIN SECRETION SYSTEM"/>
    <property type="match status" value="1"/>
</dbReference>
<dbReference type="Pfam" id="PF21090">
    <property type="entry name" value="P-loop_SecA"/>
    <property type="match status" value="1"/>
</dbReference>
<dbReference type="Pfam" id="PF07517">
    <property type="entry name" value="SecA_DEAD"/>
    <property type="match status" value="1"/>
</dbReference>
<dbReference type="Pfam" id="PF01043">
    <property type="entry name" value="SecA_PP_bind"/>
    <property type="match status" value="1"/>
</dbReference>
<dbReference type="Pfam" id="PF07516">
    <property type="entry name" value="SecA_SW"/>
    <property type="match status" value="1"/>
</dbReference>
<dbReference type="PRINTS" id="PR00906">
    <property type="entry name" value="SECA"/>
</dbReference>
<dbReference type="SMART" id="SM00957">
    <property type="entry name" value="SecA_DEAD"/>
    <property type="match status" value="1"/>
</dbReference>
<dbReference type="SMART" id="SM00958">
    <property type="entry name" value="SecA_PP_bind"/>
    <property type="match status" value="1"/>
</dbReference>
<dbReference type="SUPFAM" id="SSF81886">
    <property type="entry name" value="Helical scaffold and wing domains of SecA"/>
    <property type="match status" value="1"/>
</dbReference>
<dbReference type="SUPFAM" id="SSF52540">
    <property type="entry name" value="P-loop containing nucleoside triphosphate hydrolases"/>
    <property type="match status" value="2"/>
</dbReference>
<dbReference type="SUPFAM" id="SSF81767">
    <property type="entry name" value="Pre-protein crosslinking domain of SecA"/>
    <property type="match status" value="1"/>
</dbReference>
<dbReference type="PROSITE" id="PS01312">
    <property type="entry name" value="SECA"/>
    <property type="match status" value="1"/>
</dbReference>
<dbReference type="PROSITE" id="PS51196">
    <property type="entry name" value="SECA_MOTOR_DEAD"/>
    <property type="match status" value="1"/>
</dbReference>
<sequence>MLGKLINKFFLSRNERILKNLNDLVIKINILEKDLLKLSDKELKKKTNEFKLRLKYGDSLDSLLPEAFSVIREASKRIFGMRHFDVQILGGIILHKQCIAEMRTGEGKTLTATLPAYLNALTGKGVHIVTMNDYLAQRDANKNRILFEFLGLTVGINVSGMSRLDKKNAYLADITYGTNHEYGFDYLRDNMVFNSEKKVQRKLYFALIDEVDSILIDEARTPLVISGPIENSNILYDRINSLVSDLIPQNKKYDNSFNEIGDFCIDYKQRQVNLTEMGLKKIEKLLVKYKFISKEESLYLSKNIFFIHHILLALKAHYLFLKNVDYIIKDDQIIIVDEHTGRIMSSRRWSDGLHQAIEAKENVFIQNDNQTLATMTLQNYFRLYKKLSGMTGTASTEAFEFNSIYNLDTVIIPTNKPMIRNDLPDLVFVSKSDKMNAIISDIKNCVFRQQPVLVGTVSIEKSEKISRLLNKLNIKHNVLNAKFHSQEADIIAKAGEPNAVTIATNMAGRGTDIVLGGILKKENNEKFFTTKNSVKLLNIWKKKNRLVIKSGGLHIIGTERHESRRIDNQLRGRSGRQGDPGSSRFYLSLEDTLMKFFASENVIKIIKTLGLKSNQSIEHPWLNSAIERAQKKVENCNFDIRKQLLEYDNVINEQRSVIYNERNKLINKLDIHDHILFILKDRINFCIKQYISGNSMNVDSFFALEKELKNNFYFIKSINKFLEHDTTLYENVDKLIDLIVTTIQFSYNKNTAIVSKKYSNMIEKSVMLQILDIFWIEHLNAVDFLKQSIHLRGYAQQDPQQEYKRESFFMFQSMLEAIKNNVIKSLINIFFVDFKKNKNIYINFIDQKDYDSFHFLIMKSINIT</sequence>
<accession>Q057U3</accession>
<comment type="function">
    <text evidence="1">Part of the Sec protein translocase complex. Interacts with the SecYEG preprotein conducting channel. Has a central role in coupling the hydrolysis of ATP to the transfer of proteins into and across the cell membrane, serving as an ATP-driven molecular motor driving the stepwise translocation of polypeptide chains across the membrane.</text>
</comment>
<comment type="catalytic activity">
    <reaction evidence="2">
        <text>ATP + H2O + cellular proteinSide 1 = ADP + phosphate + cellular proteinSide 2.</text>
        <dbReference type="EC" id="7.4.2.8"/>
    </reaction>
</comment>
<comment type="subunit">
    <text evidence="2">Monomer and homodimer. Part of the essential Sec protein translocation apparatus which comprises SecA, SecYEG and auxiliary proteins SecDF-YajC and YidC.</text>
</comment>
<comment type="subcellular location">
    <subcellularLocation>
        <location evidence="2">Cell inner membrane</location>
        <topology evidence="2">Peripheral membrane protein</topology>
        <orientation evidence="2">Cytoplasmic side</orientation>
    </subcellularLocation>
    <subcellularLocation>
        <location evidence="2">Cytoplasm</location>
    </subcellularLocation>
    <text evidence="2">Distribution is 50-50.</text>
</comment>
<comment type="induction">
    <text evidence="1">Repressed under conditions of excess protein secretion capacity and derepressed when protein secretion becomes limiting. This is regulated by SecM (By similarity).</text>
</comment>
<comment type="similarity">
    <text evidence="2 3">Belongs to the SecA family.</text>
</comment>
<proteinExistence type="inferred from homology"/>
<name>SECA_BUCCC</name>
<gene>
    <name evidence="2" type="primary">secA</name>
    <name type="ordered locus">BCc_130</name>
</gene>
<keyword id="KW-0067">ATP-binding</keyword>
<keyword id="KW-0997">Cell inner membrane</keyword>
<keyword id="KW-1003">Cell membrane</keyword>
<keyword id="KW-0963">Cytoplasm</keyword>
<keyword id="KW-0472">Membrane</keyword>
<keyword id="KW-0547">Nucleotide-binding</keyword>
<keyword id="KW-0653">Protein transport</keyword>
<keyword id="KW-1185">Reference proteome</keyword>
<keyword id="KW-1278">Translocase</keyword>
<keyword id="KW-0811">Translocation</keyword>
<keyword id="KW-0813">Transport</keyword>
<protein>
    <recommendedName>
        <fullName evidence="2">Protein translocase subunit SecA</fullName>
        <ecNumber evidence="2">7.4.2.8</ecNumber>
    </recommendedName>
</protein>
<reference key="1">
    <citation type="journal article" date="2006" name="Science">
        <title>A small microbial genome: the end of a long symbiotic relationship?</title>
        <authorList>
            <person name="Perez-Brocal V."/>
            <person name="Gil R."/>
            <person name="Ramos S."/>
            <person name="Lamelas A."/>
            <person name="Postigo M."/>
            <person name="Michelena J.M."/>
            <person name="Silva F.J."/>
            <person name="Moya A."/>
            <person name="Latorre A."/>
        </authorList>
    </citation>
    <scope>NUCLEOTIDE SEQUENCE [LARGE SCALE GENOMIC DNA]</scope>
    <source>
        <strain>Cc</strain>
    </source>
</reference>